<comment type="cofactor">
    <cofactor evidence="1">
        <name>Zn(2+)</name>
        <dbReference type="ChEBI" id="CHEBI:29105"/>
    </cofactor>
    <text evidence="1">Binds 1 zinc ion.</text>
</comment>
<comment type="subcellular location">
    <subcellularLocation>
        <location evidence="1">Cytoplasm</location>
    </subcellularLocation>
</comment>
<comment type="similarity">
    <text evidence="1">Belongs to the SprT family.</text>
</comment>
<keyword id="KW-0963">Cytoplasm</keyword>
<keyword id="KW-0479">Metal-binding</keyword>
<keyword id="KW-1185">Reference proteome</keyword>
<keyword id="KW-0862">Zinc</keyword>
<proteinExistence type="inferred from homology"/>
<organism>
    <name type="scientific">Staphylococcus carnosus (strain TM300)</name>
    <dbReference type="NCBI Taxonomy" id="396513"/>
    <lineage>
        <taxon>Bacteria</taxon>
        <taxon>Bacillati</taxon>
        <taxon>Bacillota</taxon>
        <taxon>Bacilli</taxon>
        <taxon>Bacillales</taxon>
        <taxon>Staphylococcaceae</taxon>
        <taxon>Staphylococcus</taxon>
    </lineage>
</organism>
<accession>B9DMI1</accession>
<sequence length="151" mass="17640">MDNIKLQKLTESISESDFGLSFKHTAYFNPRLRTTGGRYLLGSHDIEINPKQFEKFGETALIDIIKHELCHYHLHIQRKGYKHKDADFKKLSQKVGAPRFCAAIENYEERANYIYKCLGCGETFKRIRKVNTRKMVCGKCKGKLHLHKHIK</sequence>
<name>SPRTL_STACT</name>
<reference key="1">
    <citation type="journal article" date="2009" name="Appl. Environ. Microbiol.">
        <title>Genome analysis of the meat starter culture bacterium Staphylococcus carnosus TM300.</title>
        <authorList>
            <person name="Rosenstein R."/>
            <person name="Nerz C."/>
            <person name="Biswas L."/>
            <person name="Resch A."/>
            <person name="Raddatz G."/>
            <person name="Schuster S.C."/>
            <person name="Goetz F."/>
        </authorList>
    </citation>
    <scope>NUCLEOTIDE SEQUENCE [LARGE SCALE GENOMIC DNA]</scope>
    <source>
        <strain>TM300</strain>
    </source>
</reference>
<evidence type="ECO:0000255" key="1">
    <source>
        <dbReference type="HAMAP-Rule" id="MF_00745"/>
    </source>
</evidence>
<protein>
    <recommendedName>
        <fullName evidence="1">Protein SprT-like</fullName>
    </recommendedName>
</protein>
<feature type="chain" id="PRO_1000148324" description="Protein SprT-like">
    <location>
        <begin position="1"/>
        <end position="151"/>
    </location>
</feature>
<feature type="domain" description="SprT-like" evidence="1">
    <location>
        <begin position="7"/>
        <end position="147"/>
    </location>
</feature>
<feature type="active site" evidence="1">
    <location>
        <position position="68"/>
    </location>
</feature>
<feature type="binding site" evidence="1">
    <location>
        <position position="67"/>
    </location>
    <ligand>
        <name>Zn(2+)</name>
        <dbReference type="ChEBI" id="CHEBI:29105"/>
    </ligand>
</feature>
<feature type="binding site" evidence="1">
    <location>
        <position position="71"/>
    </location>
    <ligand>
        <name>Zn(2+)</name>
        <dbReference type="ChEBI" id="CHEBI:29105"/>
    </ligand>
</feature>
<dbReference type="EMBL" id="AM295250">
    <property type="protein sequence ID" value="CAL28473.1"/>
    <property type="molecule type" value="Genomic_DNA"/>
</dbReference>
<dbReference type="RefSeq" id="WP_015900813.1">
    <property type="nucleotide sequence ID" value="NC_012121.1"/>
</dbReference>
<dbReference type="GeneID" id="93794022"/>
<dbReference type="KEGG" id="sca:SCA_1568"/>
<dbReference type="eggNOG" id="COG3091">
    <property type="taxonomic scope" value="Bacteria"/>
</dbReference>
<dbReference type="HOGENOM" id="CLU_123820_0_0_9"/>
<dbReference type="OrthoDB" id="9799909at2"/>
<dbReference type="BioCyc" id="SCAR396513:SCA_RS07965-MONOMER"/>
<dbReference type="Proteomes" id="UP000000444">
    <property type="component" value="Chromosome"/>
</dbReference>
<dbReference type="GO" id="GO:0005737">
    <property type="term" value="C:cytoplasm"/>
    <property type="evidence" value="ECO:0007669"/>
    <property type="project" value="UniProtKB-SubCell"/>
</dbReference>
<dbReference type="GO" id="GO:0008270">
    <property type="term" value="F:zinc ion binding"/>
    <property type="evidence" value="ECO:0007669"/>
    <property type="project" value="UniProtKB-UniRule"/>
</dbReference>
<dbReference type="GO" id="GO:0006950">
    <property type="term" value="P:response to stress"/>
    <property type="evidence" value="ECO:0007669"/>
    <property type="project" value="UniProtKB-ARBA"/>
</dbReference>
<dbReference type="HAMAP" id="MF_00745">
    <property type="entry name" value="SprT_like"/>
    <property type="match status" value="1"/>
</dbReference>
<dbReference type="InterPro" id="IPR006640">
    <property type="entry name" value="SprT-like_domain"/>
</dbReference>
<dbReference type="InterPro" id="IPR035240">
    <property type="entry name" value="SprT_Zn_ribbon"/>
</dbReference>
<dbReference type="InterPro" id="IPR023524">
    <property type="entry name" value="Uncharacterised_SprT-like"/>
</dbReference>
<dbReference type="NCBIfam" id="NF003339">
    <property type="entry name" value="PRK04351.1"/>
    <property type="match status" value="1"/>
</dbReference>
<dbReference type="Pfam" id="PF10263">
    <property type="entry name" value="SprT-like"/>
    <property type="match status" value="1"/>
</dbReference>
<dbReference type="Pfam" id="PF17283">
    <property type="entry name" value="Zn_ribbon_SprT"/>
    <property type="match status" value="1"/>
</dbReference>
<dbReference type="SMART" id="SM00731">
    <property type="entry name" value="SprT"/>
    <property type="match status" value="1"/>
</dbReference>
<gene>
    <name type="ordered locus">Sca_1568</name>
</gene>